<name>ACCA_ACIF5</name>
<accession>B5EQR6</accession>
<organism>
    <name type="scientific">Acidithiobacillus ferrooxidans (strain ATCC 53993 / BNL-5-31)</name>
    <name type="common">Leptospirillum ferrooxidans (ATCC 53993)</name>
    <dbReference type="NCBI Taxonomy" id="380394"/>
    <lineage>
        <taxon>Bacteria</taxon>
        <taxon>Pseudomonadati</taxon>
        <taxon>Pseudomonadota</taxon>
        <taxon>Acidithiobacillia</taxon>
        <taxon>Acidithiobacillales</taxon>
        <taxon>Acidithiobacillaceae</taxon>
        <taxon>Acidithiobacillus</taxon>
    </lineage>
</organism>
<protein>
    <recommendedName>
        <fullName evidence="1">Acetyl-coenzyme A carboxylase carboxyl transferase subunit alpha</fullName>
        <shortName evidence="1">ACCase subunit alpha</shortName>
        <shortName evidence="1">Acetyl-CoA carboxylase carboxyltransferase subunit alpha</shortName>
        <ecNumber evidence="1">2.1.3.15</ecNumber>
    </recommendedName>
</protein>
<gene>
    <name evidence="1" type="primary">accA</name>
    <name type="ordered locus">Lferr_1178</name>
</gene>
<evidence type="ECO:0000255" key="1">
    <source>
        <dbReference type="HAMAP-Rule" id="MF_00823"/>
    </source>
</evidence>
<evidence type="ECO:0000255" key="2">
    <source>
        <dbReference type="PROSITE-ProRule" id="PRU01137"/>
    </source>
</evidence>
<proteinExistence type="inferred from homology"/>
<keyword id="KW-0067">ATP-binding</keyword>
<keyword id="KW-0963">Cytoplasm</keyword>
<keyword id="KW-0275">Fatty acid biosynthesis</keyword>
<keyword id="KW-0276">Fatty acid metabolism</keyword>
<keyword id="KW-0444">Lipid biosynthesis</keyword>
<keyword id="KW-0443">Lipid metabolism</keyword>
<keyword id="KW-0547">Nucleotide-binding</keyword>
<keyword id="KW-0808">Transferase</keyword>
<dbReference type="EC" id="2.1.3.15" evidence="1"/>
<dbReference type="EMBL" id="CP001132">
    <property type="protein sequence ID" value="ACH83416.1"/>
    <property type="molecule type" value="Genomic_DNA"/>
</dbReference>
<dbReference type="RefSeq" id="WP_012536536.1">
    <property type="nucleotide sequence ID" value="NC_011206.1"/>
</dbReference>
<dbReference type="SMR" id="B5EQR6"/>
<dbReference type="KEGG" id="afe:Lferr_1178"/>
<dbReference type="eggNOG" id="COG0825">
    <property type="taxonomic scope" value="Bacteria"/>
</dbReference>
<dbReference type="HOGENOM" id="CLU_015486_0_2_6"/>
<dbReference type="UniPathway" id="UPA00655">
    <property type="reaction ID" value="UER00711"/>
</dbReference>
<dbReference type="GO" id="GO:0009317">
    <property type="term" value="C:acetyl-CoA carboxylase complex"/>
    <property type="evidence" value="ECO:0007669"/>
    <property type="project" value="InterPro"/>
</dbReference>
<dbReference type="GO" id="GO:0003989">
    <property type="term" value="F:acetyl-CoA carboxylase activity"/>
    <property type="evidence" value="ECO:0007669"/>
    <property type="project" value="InterPro"/>
</dbReference>
<dbReference type="GO" id="GO:0005524">
    <property type="term" value="F:ATP binding"/>
    <property type="evidence" value="ECO:0007669"/>
    <property type="project" value="UniProtKB-KW"/>
</dbReference>
<dbReference type="GO" id="GO:0016743">
    <property type="term" value="F:carboxyl- or carbamoyltransferase activity"/>
    <property type="evidence" value="ECO:0007669"/>
    <property type="project" value="UniProtKB-UniRule"/>
</dbReference>
<dbReference type="GO" id="GO:0006633">
    <property type="term" value="P:fatty acid biosynthetic process"/>
    <property type="evidence" value="ECO:0007669"/>
    <property type="project" value="UniProtKB-KW"/>
</dbReference>
<dbReference type="GO" id="GO:2001295">
    <property type="term" value="P:malonyl-CoA biosynthetic process"/>
    <property type="evidence" value="ECO:0007669"/>
    <property type="project" value="UniProtKB-UniRule"/>
</dbReference>
<dbReference type="Gene3D" id="3.90.226.10">
    <property type="entry name" value="2-enoyl-CoA Hydratase, Chain A, domain 1"/>
    <property type="match status" value="1"/>
</dbReference>
<dbReference type="HAMAP" id="MF_00823">
    <property type="entry name" value="AcetylCoA_CT_alpha"/>
    <property type="match status" value="1"/>
</dbReference>
<dbReference type="InterPro" id="IPR001095">
    <property type="entry name" value="Acetyl_CoA_COase_a_su"/>
</dbReference>
<dbReference type="InterPro" id="IPR029045">
    <property type="entry name" value="ClpP/crotonase-like_dom_sf"/>
</dbReference>
<dbReference type="InterPro" id="IPR011763">
    <property type="entry name" value="COA_CT_C"/>
</dbReference>
<dbReference type="NCBIfam" id="TIGR00513">
    <property type="entry name" value="accA"/>
    <property type="match status" value="1"/>
</dbReference>
<dbReference type="NCBIfam" id="NF041504">
    <property type="entry name" value="AccA_sub"/>
    <property type="match status" value="1"/>
</dbReference>
<dbReference type="NCBIfam" id="NF004344">
    <property type="entry name" value="PRK05724.1"/>
    <property type="match status" value="1"/>
</dbReference>
<dbReference type="PANTHER" id="PTHR42853">
    <property type="entry name" value="ACETYL-COENZYME A CARBOXYLASE CARBOXYL TRANSFERASE SUBUNIT ALPHA"/>
    <property type="match status" value="1"/>
</dbReference>
<dbReference type="PANTHER" id="PTHR42853:SF3">
    <property type="entry name" value="ACETYL-COENZYME A CARBOXYLASE CARBOXYL TRANSFERASE SUBUNIT ALPHA, CHLOROPLASTIC"/>
    <property type="match status" value="1"/>
</dbReference>
<dbReference type="Pfam" id="PF03255">
    <property type="entry name" value="ACCA"/>
    <property type="match status" value="1"/>
</dbReference>
<dbReference type="PRINTS" id="PR01069">
    <property type="entry name" value="ACCCTRFRASEA"/>
</dbReference>
<dbReference type="SUPFAM" id="SSF52096">
    <property type="entry name" value="ClpP/crotonase"/>
    <property type="match status" value="1"/>
</dbReference>
<dbReference type="PROSITE" id="PS50989">
    <property type="entry name" value="COA_CT_CTER"/>
    <property type="match status" value="1"/>
</dbReference>
<comment type="function">
    <text evidence="1">Component of the acetyl coenzyme A carboxylase (ACC) complex. First, biotin carboxylase catalyzes the carboxylation of biotin on its carrier protein (BCCP) and then the CO(2) group is transferred by the carboxyltransferase to acetyl-CoA to form malonyl-CoA.</text>
</comment>
<comment type="catalytic activity">
    <reaction evidence="1">
        <text>N(6)-carboxybiotinyl-L-lysyl-[protein] + acetyl-CoA = N(6)-biotinyl-L-lysyl-[protein] + malonyl-CoA</text>
        <dbReference type="Rhea" id="RHEA:54728"/>
        <dbReference type="Rhea" id="RHEA-COMP:10505"/>
        <dbReference type="Rhea" id="RHEA-COMP:10506"/>
        <dbReference type="ChEBI" id="CHEBI:57288"/>
        <dbReference type="ChEBI" id="CHEBI:57384"/>
        <dbReference type="ChEBI" id="CHEBI:83144"/>
        <dbReference type="ChEBI" id="CHEBI:83145"/>
        <dbReference type="EC" id="2.1.3.15"/>
    </reaction>
</comment>
<comment type="pathway">
    <text evidence="1">Lipid metabolism; malonyl-CoA biosynthesis; malonyl-CoA from acetyl-CoA: step 1/1.</text>
</comment>
<comment type="subunit">
    <text evidence="1">Acetyl-CoA carboxylase is a heterohexamer composed of biotin carboxyl carrier protein (AccB), biotin carboxylase (AccC) and two subunits each of ACCase subunit alpha (AccA) and ACCase subunit beta (AccD).</text>
</comment>
<comment type="subcellular location">
    <subcellularLocation>
        <location evidence="1">Cytoplasm</location>
    </subcellularLocation>
</comment>
<comment type="similarity">
    <text evidence="1">Belongs to the AccA family.</text>
</comment>
<sequence length="316" mass="34693">MKISYLDFEQSVAELDAKVEELHALNQPGIADDISRLEVKARKELQRIYSKLGAWQTVQVARHPQRPYTMDYVQALFTEVQVLAGDRAFADDQAIIGGLARFNGQPIVWMGHQKGRDTKEKIQRNFGMPRPEGYRKALRLLRLAERFALPVFTFIDTPGAYPGIGAEERGQSEAIARNLAVMSDLAVPIICTVIGEGGSGGALAIGVGDRMLMLEYGVYSVISPEGCASILWKNAAMAAEAAETLGITARRLQGMGLVDEVLAEPLGGAHRDPEAVFALARERFAHHLQELQAMDTSKLLTTRYERLMHYGVVGAA</sequence>
<reference key="1">
    <citation type="submission" date="2008-08" db="EMBL/GenBank/DDBJ databases">
        <title>Complete sequence of Acidithiobacillus ferrooxidans ATCC 53993.</title>
        <authorList>
            <person name="Lucas S."/>
            <person name="Copeland A."/>
            <person name="Lapidus A."/>
            <person name="Glavina del Rio T."/>
            <person name="Dalin E."/>
            <person name="Tice H."/>
            <person name="Bruce D."/>
            <person name="Goodwin L."/>
            <person name="Pitluck S."/>
            <person name="Sims D."/>
            <person name="Brettin T."/>
            <person name="Detter J.C."/>
            <person name="Han C."/>
            <person name="Kuske C.R."/>
            <person name="Larimer F."/>
            <person name="Land M."/>
            <person name="Hauser L."/>
            <person name="Kyrpides N."/>
            <person name="Lykidis A."/>
            <person name="Borole A.P."/>
        </authorList>
    </citation>
    <scope>NUCLEOTIDE SEQUENCE [LARGE SCALE GENOMIC DNA]</scope>
    <source>
        <strain>ATCC 53993 / BNL-5-31</strain>
    </source>
</reference>
<feature type="chain" id="PRO_1000148727" description="Acetyl-coenzyme A carboxylase carboxyl transferase subunit alpha">
    <location>
        <begin position="1"/>
        <end position="316"/>
    </location>
</feature>
<feature type="domain" description="CoA carboxyltransferase C-terminal" evidence="2">
    <location>
        <begin position="40"/>
        <end position="290"/>
    </location>
</feature>